<organism>
    <name type="scientific">Invertebrate iridescent virus 6</name>
    <name type="common">IIV-6</name>
    <name type="synonym">Chilo iridescent virus</name>
    <dbReference type="NCBI Taxonomy" id="176652"/>
    <lineage>
        <taxon>Viruses</taxon>
        <taxon>Varidnaviria</taxon>
        <taxon>Bamfordvirae</taxon>
        <taxon>Nucleocytoviricota</taxon>
        <taxon>Megaviricetes</taxon>
        <taxon>Pimascovirales</taxon>
        <taxon>Iridoviridae</taxon>
        <taxon>Betairidovirinae</taxon>
        <taxon>Iridovirus</taxon>
    </lineage>
</organism>
<protein>
    <recommendedName>
        <fullName>Uncharacterized protein 094L</fullName>
    </recommendedName>
</protein>
<organismHost>
    <name type="scientific">Acheta domesticus</name>
    <name type="common">House cricket</name>
    <dbReference type="NCBI Taxonomy" id="6997"/>
</organismHost>
<organismHost>
    <name type="scientific">Chilo suppressalis</name>
    <name type="common">Asiatic rice borer moth</name>
    <dbReference type="NCBI Taxonomy" id="168631"/>
</organismHost>
<organismHost>
    <name type="scientific">Gryllus bimaculatus</name>
    <name type="common">Two-spotted cricket</name>
    <dbReference type="NCBI Taxonomy" id="6999"/>
</organismHost>
<organismHost>
    <name type="scientific">Gryllus campestris</name>
    <dbReference type="NCBI Taxonomy" id="58607"/>
</organismHost>
<organismHost>
    <name type="scientific">Spodoptera frugiperda</name>
    <name type="common">Fall armyworm</name>
    <dbReference type="NCBI Taxonomy" id="7108"/>
</organismHost>
<feature type="chain" id="PRO_0000377984" description="Uncharacterized protein 094L">
    <location>
        <begin position="1"/>
        <end position="118"/>
    </location>
</feature>
<name>094L_IIV6</name>
<dbReference type="EMBL" id="AF303741">
    <property type="protein sequence ID" value="AAB94428.1"/>
    <property type="molecule type" value="Genomic_DNA"/>
</dbReference>
<dbReference type="PIR" id="T03054">
    <property type="entry name" value="T03054"/>
</dbReference>
<dbReference type="RefSeq" id="NP_149557.1">
    <property type="nucleotide sequence ID" value="NC_003038.1"/>
</dbReference>
<dbReference type="SMR" id="O55717"/>
<dbReference type="KEGG" id="vg:1733205"/>
<dbReference type="Proteomes" id="UP000001359">
    <property type="component" value="Genome"/>
</dbReference>
<gene>
    <name type="ORF">IIV6-094L</name>
</gene>
<accession>O55717</accession>
<proteinExistence type="predicted"/>
<keyword id="KW-1185">Reference proteome</keyword>
<sequence length="118" mass="13689">MSGGSLINSIAINTRIKKIKKSLLQNYTKEKTDMIKILYLLSTPKIVIKNNGCFEKHYTICNFISKNQQNLNENNLNFHLNGYDKYEYLSNNDKNACTCINMDFIVERLMISSEHMTV</sequence>
<reference key="1">
    <citation type="journal article" date="2001" name="Virology">
        <title>Analysis of the first complete DNA sequence of an invertebrate iridovirus: coding strategy of the genome of Chilo iridescent virus.</title>
        <authorList>
            <person name="Jakob N.J."/>
            <person name="Mueller K."/>
            <person name="Bahr U."/>
            <person name="Darai G."/>
        </authorList>
    </citation>
    <scope>NUCLEOTIDE SEQUENCE [LARGE SCALE GENOMIC DNA]</scope>
</reference>
<reference key="2">
    <citation type="journal article" date="2007" name="Virol. J.">
        <title>Comparative genomic analysis of the family Iridoviridae: re-annotating and defining the core set of iridovirus genes.</title>
        <authorList>
            <person name="Eaton H.E."/>
            <person name="Metcalf J."/>
            <person name="Penny E."/>
            <person name="Tcherepanov V."/>
            <person name="Upton C."/>
            <person name="Brunetti C.R."/>
        </authorList>
    </citation>
    <scope>GENOME REANNOTATION</scope>
</reference>